<proteinExistence type="inferred from homology"/>
<organism>
    <name type="scientific">Brucella suis (strain ATCC 23445 / NCTC 10510)</name>
    <dbReference type="NCBI Taxonomy" id="470137"/>
    <lineage>
        <taxon>Bacteria</taxon>
        <taxon>Pseudomonadati</taxon>
        <taxon>Pseudomonadota</taxon>
        <taxon>Alphaproteobacteria</taxon>
        <taxon>Hyphomicrobiales</taxon>
        <taxon>Brucellaceae</taxon>
        <taxon>Brucella/Ochrobactrum group</taxon>
        <taxon>Brucella</taxon>
    </lineage>
</organism>
<keyword id="KW-0143">Chaperone</keyword>
<keyword id="KW-0963">Cytoplasm</keyword>
<keyword id="KW-0996">Nickel insertion</keyword>
<name>URED_BRUSI</name>
<comment type="function">
    <text evidence="1">Required for maturation of urease via the functional incorporation of the urease nickel metallocenter.</text>
</comment>
<comment type="subunit">
    <text evidence="1">UreD, UreF and UreG form a complex that acts as a GTP-hydrolysis-dependent molecular chaperone, activating the urease apoprotein by helping to assemble the nickel containing metallocenter of UreC. The UreE protein probably delivers the nickel.</text>
</comment>
<comment type="subcellular location">
    <subcellularLocation>
        <location evidence="1">Cytoplasm</location>
    </subcellularLocation>
</comment>
<comment type="miscellaneous">
    <text>The second copy of ureD in this organism is annotated as a pseudogene.</text>
</comment>
<comment type="similarity">
    <text evidence="1">Belongs to the UreD family.</text>
</comment>
<comment type="sequence caution" evidence="2">
    <conflict type="frameshift">
        <sequence resource="EMBL-CDS" id="ABY37384"/>
    </conflict>
</comment>
<feature type="chain" id="PRO_0000340429" description="Urease accessory protein UreD">
    <location>
        <begin position="1"/>
        <end position="279"/>
    </location>
</feature>
<dbReference type="EMBL" id="CP000911">
    <property type="protein sequence ID" value="ABY37384.1"/>
    <property type="status" value="ALT_FRAME"/>
    <property type="molecule type" value="Genomic_DNA"/>
</dbReference>
<dbReference type="SMR" id="B0CJP3"/>
<dbReference type="KEGG" id="bmt:BSUIS_A0289"/>
<dbReference type="HOGENOM" id="CLU_056339_2_0_5"/>
<dbReference type="Proteomes" id="UP000008545">
    <property type="component" value="Chromosome I"/>
</dbReference>
<dbReference type="GO" id="GO:0005737">
    <property type="term" value="C:cytoplasm"/>
    <property type="evidence" value="ECO:0007669"/>
    <property type="project" value="UniProtKB-SubCell"/>
</dbReference>
<dbReference type="GO" id="GO:0016151">
    <property type="term" value="F:nickel cation binding"/>
    <property type="evidence" value="ECO:0007669"/>
    <property type="project" value="UniProtKB-UniRule"/>
</dbReference>
<dbReference type="HAMAP" id="MF_01384">
    <property type="entry name" value="UreD"/>
    <property type="match status" value="1"/>
</dbReference>
<dbReference type="InterPro" id="IPR002669">
    <property type="entry name" value="UreD"/>
</dbReference>
<dbReference type="PANTHER" id="PTHR33643">
    <property type="entry name" value="UREASE ACCESSORY PROTEIN D"/>
    <property type="match status" value="1"/>
</dbReference>
<dbReference type="PANTHER" id="PTHR33643:SF1">
    <property type="entry name" value="UREASE ACCESSORY PROTEIN D"/>
    <property type="match status" value="1"/>
</dbReference>
<dbReference type="Pfam" id="PF01774">
    <property type="entry name" value="UreD"/>
    <property type="match status" value="1"/>
</dbReference>
<reference key="1">
    <citation type="submission" date="2007-12" db="EMBL/GenBank/DDBJ databases">
        <title>Brucella suis ATCC 23445 whole genome shotgun sequencing project.</title>
        <authorList>
            <person name="Setubal J.C."/>
            <person name="Bowns C."/>
            <person name="Boyle S."/>
            <person name="Crasta O.R."/>
            <person name="Czar M.J."/>
            <person name="Dharmanolla C."/>
            <person name="Gillespie J.J."/>
            <person name="Kenyon R.W."/>
            <person name="Lu J."/>
            <person name="Mane S."/>
            <person name="Mohapatra S."/>
            <person name="Nagrani S."/>
            <person name="Purkayastha A."/>
            <person name="Rajasimha H.K."/>
            <person name="Shallom J.M."/>
            <person name="Shallom S."/>
            <person name="Shukla M."/>
            <person name="Snyder E.E."/>
            <person name="Sobral B.W."/>
            <person name="Wattam A.R."/>
            <person name="Will R."/>
            <person name="Williams K."/>
            <person name="Yoo H."/>
            <person name="Bruce D."/>
            <person name="Detter C."/>
            <person name="Munk C."/>
            <person name="Brettin T.S."/>
        </authorList>
    </citation>
    <scope>NUCLEOTIDE SEQUENCE [LARGE SCALE GENOMIC DNA]</scope>
    <source>
        <strain>ATCC 23445 / NCTC 10510</strain>
    </source>
</reference>
<sequence>MLIINDNNLSGPLQRVNGTGELSVQFKDGRSRISRLYQEGAAKIRMPQAVTGPLEAILINTSGGLTGGDRLKWDVALDDGASAVITTQACERIYRSGGGEARIATRLKAAKGTRLAWLPQETILFNRSILSRRLDVELEEGAQMLVVEATVFGRLAMGERVVAARFADRWRVRLGGRVIHAEEFRLGPDVGAELQAPAVAGGACAMATVLMVCEQAGRHLETARAIIGEEGGCSLWRVGKASKLVVRLYAPDSYALRRRLCPLVALLNGKAGLPKVWTI</sequence>
<accession>B0CJP3</accession>
<protein>
    <recommendedName>
        <fullName evidence="1">Urease accessory protein UreD</fullName>
    </recommendedName>
</protein>
<evidence type="ECO:0000255" key="1">
    <source>
        <dbReference type="HAMAP-Rule" id="MF_01384"/>
    </source>
</evidence>
<evidence type="ECO:0000305" key="2"/>
<gene>
    <name evidence="1" type="primary">ureD</name>
    <name type="ordered locus">BSUIS_A0289</name>
</gene>